<gene>
    <name evidence="1" type="primary">ispF</name>
    <name type="ordered locus">Sputcn32_2754</name>
</gene>
<feature type="chain" id="PRO_1000022881" description="2-C-methyl-D-erythritol 2,4-cyclodiphosphate synthase">
    <location>
        <begin position="1"/>
        <end position="161"/>
    </location>
</feature>
<feature type="binding site" evidence="1">
    <location>
        <begin position="10"/>
        <end position="12"/>
    </location>
    <ligand>
        <name>4-CDP-2-C-methyl-D-erythritol 2-phosphate</name>
        <dbReference type="ChEBI" id="CHEBI:57919"/>
    </ligand>
</feature>
<feature type="binding site" evidence="1">
    <location>
        <position position="10"/>
    </location>
    <ligand>
        <name>a divalent metal cation</name>
        <dbReference type="ChEBI" id="CHEBI:60240"/>
    </ligand>
</feature>
<feature type="binding site" evidence="1">
    <location>
        <position position="12"/>
    </location>
    <ligand>
        <name>a divalent metal cation</name>
        <dbReference type="ChEBI" id="CHEBI:60240"/>
    </ligand>
</feature>
<feature type="binding site" evidence="1">
    <location>
        <begin position="36"/>
        <end position="37"/>
    </location>
    <ligand>
        <name>4-CDP-2-C-methyl-D-erythritol 2-phosphate</name>
        <dbReference type="ChEBI" id="CHEBI:57919"/>
    </ligand>
</feature>
<feature type="binding site" evidence="1">
    <location>
        <position position="44"/>
    </location>
    <ligand>
        <name>a divalent metal cation</name>
        <dbReference type="ChEBI" id="CHEBI:60240"/>
    </ligand>
</feature>
<feature type="binding site" evidence="1">
    <location>
        <begin position="58"/>
        <end position="60"/>
    </location>
    <ligand>
        <name>4-CDP-2-C-methyl-D-erythritol 2-phosphate</name>
        <dbReference type="ChEBI" id="CHEBI:57919"/>
    </ligand>
</feature>
<feature type="binding site" evidence="1">
    <location>
        <begin position="63"/>
        <end position="67"/>
    </location>
    <ligand>
        <name>4-CDP-2-C-methyl-D-erythritol 2-phosphate</name>
        <dbReference type="ChEBI" id="CHEBI:57919"/>
    </ligand>
</feature>
<feature type="binding site" evidence="1">
    <location>
        <begin position="134"/>
        <end position="137"/>
    </location>
    <ligand>
        <name>4-CDP-2-C-methyl-D-erythritol 2-phosphate</name>
        <dbReference type="ChEBI" id="CHEBI:57919"/>
    </ligand>
</feature>
<feature type="binding site" evidence="1">
    <location>
        <position position="141"/>
    </location>
    <ligand>
        <name>4-CDP-2-C-methyl-D-erythritol 2-phosphate</name>
        <dbReference type="ChEBI" id="CHEBI:57919"/>
    </ligand>
</feature>
<feature type="binding site" evidence="1">
    <location>
        <position position="144"/>
    </location>
    <ligand>
        <name>4-CDP-2-C-methyl-D-erythritol 2-phosphate</name>
        <dbReference type="ChEBI" id="CHEBI:57919"/>
    </ligand>
</feature>
<feature type="site" description="Transition state stabilizer" evidence="1">
    <location>
        <position position="36"/>
    </location>
</feature>
<feature type="site" description="Transition state stabilizer" evidence="1">
    <location>
        <position position="135"/>
    </location>
</feature>
<reference key="1">
    <citation type="submission" date="2007-04" db="EMBL/GenBank/DDBJ databases">
        <title>Complete sequence of Shewanella putrefaciens CN-32.</title>
        <authorList>
            <consortium name="US DOE Joint Genome Institute"/>
            <person name="Copeland A."/>
            <person name="Lucas S."/>
            <person name="Lapidus A."/>
            <person name="Barry K."/>
            <person name="Detter J.C."/>
            <person name="Glavina del Rio T."/>
            <person name="Hammon N."/>
            <person name="Israni S."/>
            <person name="Dalin E."/>
            <person name="Tice H."/>
            <person name="Pitluck S."/>
            <person name="Chain P."/>
            <person name="Malfatti S."/>
            <person name="Shin M."/>
            <person name="Vergez L."/>
            <person name="Schmutz J."/>
            <person name="Larimer F."/>
            <person name="Land M."/>
            <person name="Hauser L."/>
            <person name="Kyrpides N."/>
            <person name="Mikhailova N."/>
            <person name="Romine M.F."/>
            <person name="Fredrickson J."/>
            <person name="Tiedje J."/>
            <person name="Richardson P."/>
        </authorList>
    </citation>
    <scope>NUCLEOTIDE SEQUENCE [LARGE SCALE GENOMIC DNA]</scope>
    <source>
        <strain>CN-32 / ATCC BAA-453</strain>
    </source>
</reference>
<organism>
    <name type="scientific">Shewanella putrefaciens (strain CN-32 / ATCC BAA-453)</name>
    <dbReference type="NCBI Taxonomy" id="319224"/>
    <lineage>
        <taxon>Bacteria</taxon>
        <taxon>Pseudomonadati</taxon>
        <taxon>Pseudomonadota</taxon>
        <taxon>Gammaproteobacteria</taxon>
        <taxon>Alteromonadales</taxon>
        <taxon>Shewanellaceae</taxon>
        <taxon>Shewanella</taxon>
    </lineage>
</organism>
<evidence type="ECO:0000255" key="1">
    <source>
        <dbReference type="HAMAP-Rule" id="MF_00107"/>
    </source>
</evidence>
<sequence length="161" mass="17447">MKIRIGHGFDVHKFGEVRPLILCGVEVPYETGLVAHSDGDVVLHAVSDAILGAMALGDIGKHFPDTDTAYKGADSRVLLRHCYDLAKQRGFELGNVDVTIIAQAPKIAPHIEAMRQVLATDLMAELDDINVKATTTEKLGFTGRKEGIAVEAVVLMSRKQD</sequence>
<dbReference type="EC" id="4.6.1.12" evidence="1"/>
<dbReference type="EMBL" id="CP000681">
    <property type="protein sequence ID" value="ABP76473.1"/>
    <property type="molecule type" value="Genomic_DNA"/>
</dbReference>
<dbReference type="SMR" id="A4Y940"/>
<dbReference type="STRING" id="319224.Sputcn32_2754"/>
<dbReference type="KEGG" id="spc:Sputcn32_2754"/>
<dbReference type="eggNOG" id="COG0245">
    <property type="taxonomic scope" value="Bacteria"/>
</dbReference>
<dbReference type="HOGENOM" id="CLU_084630_2_0_6"/>
<dbReference type="UniPathway" id="UPA00056">
    <property type="reaction ID" value="UER00095"/>
</dbReference>
<dbReference type="GO" id="GO:0008685">
    <property type="term" value="F:2-C-methyl-D-erythritol 2,4-cyclodiphosphate synthase activity"/>
    <property type="evidence" value="ECO:0007669"/>
    <property type="project" value="UniProtKB-UniRule"/>
</dbReference>
<dbReference type="GO" id="GO:0046872">
    <property type="term" value="F:metal ion binding"/>
    <property type="evidence" value="ECO:0007669"/>
    <property type="project" value="UniProtKB-KW"/>
</dbReference>
<dbReference type="GO" id="GO:0019288">
    <property type="term" value="P:isopentenyl diphosphate biosynthetic process, methylerythritol 4-phosphate pathway"/>
    <property type="evidence" value="ECO:0007669"/>
    <property type="project" value="UniProtKB-UniRule"/>
</dbReference>
<dbReference type="GO" id="GO:0016114">
    <property type="term" value="P:terpenoid biosynthetic process"/>
    <property type="evidence" value="ECO:0007669"/>
    <property type="project" value="InterPro"/>
</dbReference>
<dbReference type="CDD" id="cd00554">
    <property type="entry name" value="MECDP_synthase"/>
    <property type="match status" value="1"/>
</dbReference>
<dbReference type="FunFam" id="3.30.1330.50:FF:000001">
    <property type="entry name" value="2-C-methyl-D-erythritol 2,4-cyclodiphosphate synthase"/>
    <property type="match status" value="1"/>
</dbReference>
<dbReference type="Gene3D" id="3.30.1330.50">
    <property type="entry name" value="2-C-methyl-D-erythritol 2,4-cyclodiphosphate synthase"/>
    <property type="match status" value="1"/>
</dbReference>
<dbReference type="HAMAP" id="MF_00107">
    <property type="entry name" value="IspF"/>
    <property type="match status" value="1"/>
</dbReference>
<dbReference type="InterPro" id="IPR003526">
    <property type="entry name" value="MECDP_synthase"/>
</dbReference>
<dbReference type="InterPro" id="IPR020555">
    <property type="entry name" value="MECDP_synthase_CS"/>
</dbReference>
<dbReference type="InterPro" id="IPR036571">
    <property type="entry name" value="MECDP_synthase_sf"/>
</dbReference>
<dbReference type="NCBIfam" id="TIGR00151">
    <property type="entry name" value="ispF"/>
    <property type="match status" value="1"/>
</dbReference>
<dbReference type="PANTHER" id="PTHR43181">
    <property type="entry name" value="2-C-METHYL-D-ERYTHRITOL 2,4-CYCLODIPHOSPHATE SYNTHASE, CHLOROPLASTIC"/>
    <property type="match status" value="1"/>
</dbReference>
<dbReference type="PANTHER" id="PTHR43181:SF1">
    <property type="entry name" value="2-C-METHYL-D-ERYTHRITOL 2,4-CYCLODIPHOSPHATE SYNTHASE, CHLOROPLASTIC"/>
    <property type="match status" value="1"/>
</dbReference>
<dbReference type="Pfam" id="PF02542">
    <property type="entry name" value="YgbB"/>
    <property type="match status" value="1"/>
</dbReference>
<dbReference type="SUPFAM" id="SSF69765">
    <property type="entry name" value="IpsF-like"/>
    <property type="match status" value="1"/>
</dbReference>
<dbReference type="PROSITE" id="PS01350">
    <property type="entry name" value="ISPF"/>
    <property type="match status" value="1"/>
</dbReference>
<comment type="function">
    <text evidence="1">Involved in the biosynthesis of isopentenyl diphosphate (IPP) and dimethylallyl diphosphate (DMAPP), two major building blocks of isoprenoid compounds. Catalyzes the conversion of 4-diphosphocytidyl-2-C-methyl-D-erythritol 2-phosphate (CDP-ME2P) to 2-C-methyl-D-erythritol 2,4-cyclodiphosphate (ME-CPP) with a corresponding release of cytidine 5-monophosphate (CMP).</text>
</comment>
<comment type="catalytic activity">
    <reaction evidence="1">
        <text>4-CDP-2-C-methyl-D-erythritol 2-phosphate = 2-C-methyl-D-erythritol 2,4-cyclic diphosphate + CMP</text>
        <dbReference type="Rhea" id="RHEA:23864"/>
        <dbReference type="ChEBI" id="CHEBI:57919"/>
        <dbReference type="ChEBI" id="CHEBI:58483"/>
        <dbReference type="ChEBI" id="CHEBI:60377"/>
        <dbReference type="EC" id="4.6.1.12"/>
    </reaction>
</comment>
<comment type="cofactor">
    <cofactor evidence="1">
        <name>a divalent metal cation</name>
        <dbReference type="ChEBI" id="CHEBI:60240"/>
    </cofactor>
    <text evidence="1">Binds 1 divalent metal cation per subunit.</text>
</comment>
<comment type="pathway">
    <text evidence="1">Isoprenoid biosynthesis; isopentenyl diphosphate biosynthesis via DXP pathway; isopentenyl diphosphate from 1-deoxy-D-xylulose 5-phosphate: step 4/6.</text>
</comment>
<comment type="subunit">
    <text evidence="1">Homotrimer.</text>
</comment>
<comment type="similarity">
    <text evidence="1">Belongs to the IspF family.</text>
</comment>
<protein>
    <recommendedName>
        <fullName evidence="1">2-C-methyl-D-erythritol 2,4-cyclodiphosphate synthase</fullName>
        <shortName evidence="1">MECDP-synthase</shortName>
        <shortName evidence="1">MECPP-synthase</shortName>
        <shortName evidence="1">MECPS</shortName>
        <ecNumber evidence="1">4.6.1.12</ecNumber>
    </recommendedName>
</protein>
<name>ISPF_SHEPC</name>
<accession>A4Y940</accession>
<proteinExistence type="inferred from homology"/>
<keyword id="KW-0414">Isoprene biosynthesis</keyword>
<keyword id="KW-0456">Lyase</keyword>
<keyword id="KW-0479">Metal-binding</keyword>